<comment type="function">
    <text evidence="1">Fast twitching myosin mediating the high-velocity and low-tension contractions of specific striated muscles.</text>
</comment>
<comment type="subunit">
    <text evidence="1">Muscle myosin is a hexameric protein that consists of 2 heavy chain subunits (MHC), 2 alkali light chain subunits (MLC) and 2 regulatory light chain subunits (MLC-2).</text>
</comment>
<comment type="subcellular location">
    <subcellularLocation>
        <location evidence="1">Cytoplasm</location>
        <location evidence="1">Myofibril</location>
    </subcellularLocation>
    <text evidence="1">Thick filaments of the myofibrils.</text>
</comment>
<comment type="domain">
    <text>The rodlike tail sequence is highly repetitive, showing cycles of a 28-residue repeat pattern composed of 4 heptapeptides, characteristic for alpha-helical coiled coils.</text>
</comment>
<comment type="domain">
    <text evidence="7">Limited proteolysis of myosin heavy chain produces 1 light meromyosin (LMM) and 1 heavy meromyosin (HMM). HMM can be further cleaved into 2 globular subfragments (S1) and 1 rod-shaped subfragment (S2).</text>
</comment>
<comment type="domain">
    <text evidence="1">The head-like domain S1 exhibits a much faster ATP-induced detachment from actin, and ADP affinity is more than 3-fold weaker than other myosins.</text>
</comment>
<comment type="similarity">
    <text evidence="7">Belongs to the TRAFAC class myosin-kinesin ATPase superfamily. Myosin family.</text>
</comment>
<name>MYH13_CANLF</name>
<evidence type="ECO:0000250" key="1"/>
<evidence type="ECO:0000255" key="2"/>
<evidence type="ECO:0000255" key="3">
    <source>
        <dbReference type="PROSITE-ProRule" id="PRU00116"/>
    </source>
</evidence>
<evidence type="ECO:0000255" key="4">
    <source>
        <dbReference type="PROSITE-ProRule" id="PRU00782"/>
    </source>
</evidence>
<evidence type="ECO:0000255" key="5">
    <source>
        <dbReference type="PROSITE-ProRule" id="PRU01190"/>
    </source>
</evidence>
<evidence type="ECO:0000256" key="6">
    <source>
        <dbReference type="SAM" id="MobiDB-lite"/>
    </source>
</evidence>
<evidence type="ECO:0000305" key="7"/>
<dbReference type="EMBL" id="DQ227284">
    <property type="protein sequence ID" value="ABB96411.1"/>
    <property type="molecule type" value="Genomic_DNA"/>
</dbReference>
<dbReference type="SMR" id="Q076A3"/>
<dbReference type="FunCoup" id="Q076A3">
    <property type="interactions" value="35"/>
</dbReference>
<dbReference type="STRING" id="9615.ENSCAFP00000025727"/>
<dbReference type="PaxDb" id="9612-ENSCAFP00000025727"/>
<dbReference type="eggNOG" id="KOG0161">
    <property type="taxonomic scope" value="Eukaryota"/>
</dbReference>
<dbReference type="InParanoid" id="Q076A3"/>
<dbReference type="Proteomes" id="UP000002254">
    <property type="component" value="Unplaced"/>
</dbReference>
<dbReference type="Proteomes" id="UP000694429">
    <property type="component" value="Unplaced"/>
</dbReference>
<dbReference type="Proteomes" id="UP000694542">
    <property type="component" value="Unplaced"/>
</dbReference>
<dbReference type="Proteomes" id="UP000805418">
    <property type="component" value="Unplaced"/>
</dbReference>
<dbReference type="GO" id="GO:0005737">
    <property type="term" value="C:cytoplasm"/>
    <property type="evidence" value="ECO:0000318"/>
    <property type="project" value="GO_Central"/>
</dbReference>
<dbReference type="GO" id="GO:0030016">
    <property type="term" value="C:myofibril"/>
    <property type="evidence" value="ECO:0007669"/>
    <property type="project" value="UniProtKB-SubCell"/>
</dbReference>
<dbReference type="GO" id="GO:0032982">
    <property type="term" value="C:myosin filament"/>
    <property type="evidence" value="ECO:0000318"/>
    <property type="project" value="GO_Central"/>
</dbReference>
<dbReference type="GO" id="GO:0016460">
    <property type="term" value="C:myosin II complex"/>
    <property type="evidence" value="ECO:0000318"/>
    <property type="project" value="GO_Central"/>
</dbReference>
<dbReference type="GO" id="GO:0051015">
    <property type="term" value="F:actin filament binding"/>
    <property type="evidence" value="ECO:0000318"/>
    <property type="project" value="GO_Central"/>
</dbReference>
<dbReference type="GO" id="GO:0005524">
    <property type="term" value="F:ATP binding"/>
    <property type="evidence" value="ECO:0007669"/>
    <property type="project" value="UniProtKB-KW"/>
</dbReference>
<dbReference type="GO" id="GO:0005516">
    <property type="term" value="F:calmodulin binding"/>
    <property type="evidence" value="ECO:0007669"/>
    <property type="project" value="UniProtKB-KW"/>
</dbReference>
<dbReference type="GO" id="GO:0000146">
    <property type="term" value="F:microfilament motor activity"/>
    <property type="evidence" value="ECO:0000318"/>
    <property type="project" value="GO_Central"/>
</dbReference>
<dbReference type="GO" id="GO:0006936">
    <property type="term" value="P:muscle contraction"/>
    <property type="evidence" value="ECO:0000318"/>
    <property type="project" value="GO_Central"/>
</dbReference>
<dbReference type="CDD" id="cd14923">
    <property type="entry name" value="MYSc_Myh13"/>
    <property type="match status" value="1"/>
</dbReference>
<dbReference type="FunFam" id="1.10.10.820:FF:000001">
    <property type="entry name" value="Myosin heavy chain"/>
    <property type="match status" value="1"/>
</dbReference>
<dbReference type="FunFam" id="1.20.5.340:FF:000003">
    <property type="entry name" value="Myosin heavy chain"/>
    <property type="match status" value="1"/>
</dbReference>
<dbReference type="FunFam" id="1.20.5.340:FF:000004">
    <property type="entry name" value="Myosin heavy chain"/>
    <property type="match status" value="1"/>
</dbReference>
<dbReference type="FunFam" id="1.20.5.340:FF:000006">
    <property type="entry name" value="Myosin heavy chain"/>
    <property type="match status" value="1"/>
</dbReference>
<dbReference type="FunFam" id="1.20.5.340:FF:000013">
    <property type="entry name" value="Myosin heavy chain"/>
    <property type="match status" value="1"/>
</dbReference>
<dbReference type="FunFam" id="1.20.5.370:FF:000001">
    <property type="entry name" value="Myosin heavy chain"/>
    <property type="match status" value="1"/>
</dbReference>
<dbReference type="FunFam" id="1.20.5.370:FF:000002">
    <property type="entry name" value="Myosin heavy chain"/>
    <property type="match status" value="1"/>
</dbReference>
<dbReference type="FunFam" id="1.20.5.370:FF:000003">
    <property type="entry name" value="Myosin heavy chain"/>
    <property type="match status" value="1"/>
</dbReference>
<dbReference type="FunFam" id="1.20.5.370:FF:000007">
    <property type="entry name" value="Myosin heavy chain"/>
    <property type="match status" value="1"/>
</dbReference>
<dbReference type="FunFam" id="1.20.5.370:FF:000008">
    <property type="entry name" value="Myosin heavy chain"/>
    <property type="match status" value="1"/>
</dbReference>
<dbReference type="FunFam" id="1.20.5.4820:FF:000001">
    <property type="entry name" value="Myosin heavy chain"/>
    <property type="match status" value="1"/>
</dbReference>
<dbReference type="FunFam" id="1.20.58.530:FF:000001">
    <property type="entry name" value="Myosin heavy chain"/>
    <property type="match status" value="1"/>
</dbReference>
<dbReference type="FunFam" id="2.30.30.360:FF:000001">
    <property type="entry name" value="Myosin heavy chain"/>
    <property type="match status" value="1"/>
</dbReference>
<dbReference type="FunFam" id="3.40.850.10:FF:000024">
    <property type="entry name" value="Myosin heavy chain, isoform J"/>
    <property type="match status" value="1"/>
</dbReference>
<dbReference type="FunFam" id="1.20.120.720:FF:000001">
    <property type="entry name" value="Myosin heavy chain, muscle"/>
    <property type="match status" value="1"/>
</dbReference>
<dbReference type="Gene3D" id="1.10.10.820">
    <property type="match status" value="1"/>
</dbReference>
<dbReference type="Gene3D" id="1.20.5.340">
    <property type="match status" value="5"/>
</dbReference>
<dbReference type="Gene3D" id="1.20.5.370">
    <property type="match status" value="4"/>
</dbReference>
<dbReference type="Gene3D" id="1.20.5.4820">
    <property type="match status" value="1"/>
</dbReference>
<dbReference type="Gene3D" id="1.20.58.530">
    <property type="match status" value="1"/>
</dbReference>
<dbReference type="Gene3D" id="6.10.250.2420">
    <property type="match status" value="1"/>
</dbReference>
<dbReference type="Gene3D" id="3.40.850.10">
    <property type="entry name" value="Kinesin motor domain"/>
    <property type="match status" value="1"/>
</dbReference>
<dbReference type="Gene3D" id="2.30.30.360">
    <property type="entry name" value="Myosin S1 fragment, N-terminal"/>
    <property type="match status" value="1"/>
</dbReference>
<dbReference type="Gene3D" id="1.20.120.720">
    <property type="entry name" value="Myosin VI head, motor domain, U50 subdomain"/>
    <property type="match status" value="1"/>
</dbReference>
<dbReference type="InterPro" id="IPR036961">
    <property type="entry name" value="Kinesin_motor_dom_sf"/>
</dbReference>
<dbReference type="InterPro" id="IPR042702">
    <property type="entry name" value="Myh13_MYSc"/>
</dbReference>
<dbReference type="InterPro" id="IPR001609">
    <property type="entry name" value="Myosin_head_motor_dom-like"/>
</dbReference>
<dbReference type="InterPro" id="IPR004009">
    <property type="entry name" value="Myosin_N"/>
</dbReference>
<dbReference type="InterPro" id="IPR008989">
    <property type="entry name" value="Myosin_S1_N"/>
</dbReference>
<dbReference type="InterPro" id="IPR002928">
    <property type="entry name" value="Myosin_tail"/>
</dbReference>
<dbReference type="InterPro" id="IPR027417">
    <property type="entry name" value="P-loop_NTPase"/>
</dbReference>
<dbReference type="InterPro" id="IPR014751">
    <property type="entry name" value="XRCC4-like_C"/>
</dbReference>
<dbReference type="PANTHER" id="PTHR45615">
    <property type="entry name" value="MYOSIN HEAVY CHAIN, NON-MUSCLE"/>
    <property type="match status" value="1"/>
</dbReference>
<dbReference type="PANTHER" id="PTHR45615:SF64">
    <property type="entry name" value="MYOSIN-13"/>
    <property type="match status" value="1"/>
</dbReference>
<dbReference type="Pfam" id="PF00063">
    <property type="entry name" value="Myosin_head"/>
    <property type="match status" value="1"/>
</dbReference>
<dbReference type="Pfam" id="PF02736">
    <property type="entry name" value="Myosin_N"/>
    <property type="match status" value="1"/>
</dbReference>
<dbReference type="Pfam" id="PF01576">
    <property type="entry name" value="Myosin_tail_1"/>
    <property type="match status" value="1"/>
</dbReference>
<dbReference type="PRINTS" id="PR00193">
    <property type="entry name" value="MYOSINHEAVY"/>
</dbReference>
<dbReference type="SMART" id="SM00242">
    <property type="entry name" value="MYSc"/>
    <property type="match status" value="1"/>
</dbReference>
<dbReference type="SUPFAM" id="SSF90257">
    <property type="entry name" value="Myosin rod fragments"/>
    <property type="match status" value="5"/>
</dbReference>
<dbReference type="SUPFAM" id="SSF52540">
    <property type="entry name" value="P-loop containing nucleoside triphosphate hydrolases"/>
    <property type="match status" value="1"/>
</dbReference>
<dbReference type="SUPFAM" id="SSF57997">
    <property type="entry name" value="Tropomyosin"/>
    <property type="match status" value="1"/>
</dbReference>
<dbReference type="PROSITE" id="PS50096">
    <property type="entry name" value="IQ"/>
    <property type="match status" value="1"/>
</dbReference>
<dbReference type="PROSITE" id="PS51456">
    <property type="entry name" value="MYOSIN_MOTOR"/>
    <property type="match status" value="1"/>
</dbReference>
<dbReference type="PROSITE" id="PS51844">
    <property type="entry name" value="SH3_LIKE"/>
    <property type="match status" value="1"/>
</dbReference>
<feature type="chain" id="PRO_0000274172" description="Myosin-13">
    <location>
        <begin position="1"/>
        <end position="1940"/>
    </location>
</feature>
<feature type="domain" description="Myosin N-terminal SH3-like" evidence="5">
    <location>
        <begin position="33"/>
        <end position="82"/>
    </location>
</feature>
<feature type="domain" description="Myosin motor" evidence="4">
    <location>
        <begin position="86"/>
        <end position="782"/>
    </location>
</feature>
<feature type="domain" description="IQ" evidence="3">
    <location>
        <begin position="785"/>
        <end position="814"/>
    </location>
</feature>
<feature type="region of interest" description="Actin-binding" evidence="1">
    <location>
        <begin position="659"/>
        <end position="681"/>
    </location>
</feature>
<feature type="region of interest" description="Actin-binding" evidence="1">
    <location>
        <begin position="761"/>
        <end position="775"/>
    </location>
</feature>
<feature type="region of interest" description="Disordered" evidence="6">
    <location>
        <begin position="1886"/>
        <end position="1940"/>
    </location>
</feature>
<feature type="coiled-coil region" evidence="2">
    <location>
        <begin position="843"/>
        <end position="1940"/>
    </location>
</feature>
<feature type="compositionally biased region" description="Basic and acidic residues" evidence="6">
    <location>
        <begin position="1929"/>
        <end position="1940"/>
    </location>
</feature>
<feature type="binding site" evidence="2">
    <location>
        <begin position="179"/>
        <end position="186"/>
    </location>
    <ligand>
        <name>ATP</name>
        <dbReference type="ChEBI" id="CHEBI:30616"/>
    </ligand>
</feature>
<feature type="modified residue" description="N6,N6,N6-trimethyllysine" evidence="2">
    <location>
        <position position="130"/>
    </location>
</feature>
<reference key="1">
    <citation type="submission" date="2005-09" db="EMBL/GenBank/DDBJ databases">
        <title>Canine myosin heavy chain expression.</title>
        <authorList>
            <person name="Maccatrozzo L."/>
            <person name="Patruno M."/>
            <person name="Mascarello F."/>
            <person name="Reggiani C."/>
        </authorList>
    </citation>
    <scope>NUCLEOTIDE SEQUENCE [GENOMIC DNA]</scope>
</reference>
<keyword id="KW-0009">Actin-binding</keyword>
<keyword id="KW-0067">ATP-binding</keyword>
<keyword id="KW-0112">Calmodulin-binding</keyword>
<keyword id="KW-0175">Coiled coil</keyword>
<keyword id="KW-0963">Cytoplasm</keyword>
<keyword id="KW-0488">Methylation</keyword>
<keyword id="KW-0505">Motor protein</keyword>
<keyword id="KW-0514">Muscle protein</keyword>
<keyword id="KW-0518">Myosin</keyword>
<keyword id="KW-0547">Nucleotide-binding</keyword>
<keyword id="KW-1185">Reference proteome</keyword>
<keyword id="KW-0787">Thick filament</keyword>
<proteinExistence type="inferred from homology"/>
<protein>
    <recommendedName>
        <fullName>Myosin-13</fullName>
    </recommendedName>
    <alternativeName>
        <fullName>Fast myosin heavy chain extraocular</fullName>
    </alternativeName>
    <alternativeName>
        <fullName>Myosin heavy chain 13</fullName>
    </alternativeName>
    <alternativeName>
        <fullName>Myosin heavy chain, skeletal muscle, extraocular</fullName>
        <shortName>MyHC-eo</shortName>
    </alternativeName>
</protein>
<sequence length="1940" mass="223341">MSSDAEMAIFGEAAPYLRKPEKERIEAQNRPFDSKKACFAMDDKEMYVKGMIQSRENDKVTVKTLDDRTLTLNSDQVFPMNPPKFDKIEDMAMMTHLHEPAVLYNLKERYAAWMIYTYSGLFCVTVNPYKWLPVYNPEVVTAYRGKKRQEAPPHIFSISDNAYQFMLTDRDNQSILITGESGAGKTVNTKRVIQYFATIAVTGEKKKEQQPGKMQGTLEDQIIQANPLLEAFGNAKTVRNDNSSRFGKFIRIHFGATGKLASADIETYLLEKSRVTFQLSSERSYHIFYQILSNKKPELIDLLLISTNPFDFPFVSQGEVTVASINDSEELLATDNAIDILGFSSEEKVGIYKLTGAVMHYGNMKFKQKQREEQAEPDGTEVADKAGYLMGLNSAEMLKGLCCPRVKVGNEYVTKGQNVQQVTNSVGALAKAVYEKMFLWMVTRINQQLDTKQPRQYFIGVLDIAGFEIFDFNSLEQLCINFTNEKLQQFFNHHMFVLEQEEYKKEGIEWEFIDFGMDLAACIELIEKPMGIFSILEEECMFPKATDTSFKNKLYDQHLGKSNNFQKPKPAKGKAEAHFSLVHYAGTVDYNIAGWLDKNKDPLNETVVGLYQKSSLKLLSFLFSNYAGAEAGDSGGSKKGGKKKGSSFQTVSAVFRENLNKLMTNLRSTHPHFVRCLIPNETKTPGVMDHYLVMHQLRCNGVLEGIRICRKGFPSRILYADFKQRYRILNASAIPEGQFIDSKNASEKLLSSIDVDREQYRFGHTKVFFKAGLLGLLEEMRDEKLVTLMTRTQAICRGYLMRVEFKKMMERRESIFCIQYNIRSFMNVKHWPWMNLFFKIKPLLKSAEAEREMATMKEDFERAKEELARSEARRKELEEKMVSLLQEKNDLQLQVQSETENLIDAEERCEGLIKSKIQLEAKVKELNERLEEEEEVNSDLVAKKRSLEDKCSSLKRDIDDLELTLTKVEKEKHATENKVKNLSEEMTALEENISKLTKEKKSLQEAHQQALDDLQVEEDKVNGLIKINVKLEQQTDDLEGSLEQEKKLRADLERIKKKLEGDLKLSQESIMDLENDKQQVEEKLKKKEFEISQLQTKIDDEQVHSLQLQKKIKELQARIEELEEEIEAERASRAKAEKQRSDLSRELEEISERLEEASGVTSAQVEMNKKREAEFQKLRRDLEEATLQHEATTAALRKKHADSVAELGEQIDNLQRVKQKLEKEKSELKMEIDDLASNIETVSKSKSNVERMCRTVEDQFNEIKAKDDQQTQLIHDLNMQKARLQTQNGELSHQLEEKESLISQLTKGKQALTQQLEELKRQLEEETKAKNALAHALQSSRHDCDLLREQYEEEQEGKAELQRALSKANSEVAQWRTKYETDAIQRTEELEEAKKKLAQRLQEAEENTEAVSSKCASLEKTKQRLQGEVDDLMLDLERTSTARAILDRKQRDLDKVLAEWKQKLDGSQAELEAAQKGSRSLSTEIFKMQNAYEEVVDQLETLRRENKNLQEEISDLTEQIAETGKHLQEVEKSKKQVEQEKSDLQVALEEVEASGSLEHEESKILRVQLELSQVKSELDRRVTEKDEEIEQLKRNSQRAAEAMQSMLDAEIRSRNDALRLKKKMEGDLNELEIQLGHSSRQVAETQKHLRTVQGQLKDSQLHLDDALRSNEDLKEQLAIVERRNGLLLEELEEMKAALEQTERTRRLSEQELLDASDRVQLLHSQNTSLINTKKKLEVDIAQCQAEVENSLQESRNAEEKAKKAITDAAMMAEELKKEQDTSAHLERMKKNLEQTVKDLQHRLDEAEQLALKGGKKQIQKLEARVRELESELDAEQKRGAEALKGAHKYERKVKELTYQAEEDRKNILRLQDLVDKLQAKVKAYKRQAEEAEEQANTQMSKCRRVQHELEEAEERADIAESQVNKLRAKSRDVGAQKMEE</sequence>
<accession>Q076A3</accession>
<organism>
    <name type="scientific">Canis lupus familiaris</name>
    <name type="common">Dog</name>
    <name type="synonym">Canis familiaris</name>
    <dbReference type="NCBI Taxonomy" id="9615"/>
    <lineage>
        <taxon>Eukaryota</taxon>
        <taxon>Metazoa</taxon>
        <taxon>Chordata</taxon>
        <taxon>Craniata</taxon>
        <taxon>Vertebrata</taxon>
        <taxon>Euteleostomi</taxon>
        <taxon>Mammalia</taxon>
        <taxon>Eutheria</taxon>
        <taxon>Laurasiatheria</taxon>
        <taxon>Carnivora</taxon>
        <taxon>Caniformia</taxon>
        <taxon>Canidae</taxon>
        <taxon>Canis</taxon>
    </lineage>
</organism>
<gene>
    <name type="primary">MYH13</name>
</gene>